<feature type="chain" id="PRO_0000078604" description="Chaperone protein dnaK">
    <location>
        <begin position="1"/>
        <end position="618"/>
    </location>
</feature>
<feature type="region of interest" description="Disordered" evidence="2">
    <location>
        <begin position="595"/>
        <end position="618"/>
    </location>
</feature>
<gene>
    <name type="primary">dnaK-A</name>
</gene>
<gene>
    <name type="primary">dnaK-B</name>
</gene>
<reference key="1">
    <citation type="journal article" date="1995" name="Plant Mol. Biol. Rep.">
        <title>Nucleotide sequence of the cyanelle DNA from Cyanophora paradoxa.</title>
        <authorList>
            <person name="Stirewalt V.L."/>
            <person name="Michalowski C.B."/>
            <person name="Loeffelhardt W."/>
            <person name="Bohnert H.J."/>
            <person name="Bryant D.A."/>
        </authorList>
    </citation>
    <scope>NUCLEOTIDE SEQUENCE [LARGE SCALE GENOMIC DNA]</scope>
    <source>
        <strain>UTEX LB 555 / Pringsheim</strain>
    </source>
</reference>
<reference key="2">
    <citation type="book" date="1997" name="Eukaryotism and symbiosis">
        <title>The complete sequence of the cyanelle genome of Cyanophora paradoxa: the genetic complexity of a primitive plastid.</title>
        <editorList>
            <person name="Schenk H.E.A."/>
            <person name="Herrmann R."/>
            <person name="Jeon K.W."/>
            <person name="Mueller N.E."/>
            <person name="Schwemmler W."/>
        </editorList>
        <authorList>
            <person name="Loeffelhardt W."/>
            <person name="Stirewalt V.L."/>
            <person name="Michalowski C.B."/>
            <person name="Annarella M."/>
            <person name="Farley J.Y."/>
            <person name="Schluchter W.M."/>
            <person name="Chung S."/>
            <person name="Newmann-Spallart C."/>
            <person name="Steiner J.M."/>
            <person name="Jakowitsch J."/>
            <person name="Bohnert H.J."/>
            <person name="Bryant D.A."/>
        </authorList>
    </citation>
    <scope>NUCLEOTIDE SEQUENCE [LARGE SCALE GENOMIC DNA]</scope>
    <source>
        <strain>UTEX LB 555 / Pringsheim</strain>
    </source>
</reference>
<sequence length="618" mass="67418">MGKIVGIDLGTTNSVVAVMEGGKPTVITNAEGFRTTPSVVAYTKTGDRLVGQIAKRQAVLNPGNTFYSVKRFIGRKFDEVTEEAKQVPYKVTGTQNVRIECPALQTSFTPEEISAQVLRKLAEDASKYIGEPVTQAVITVPAYFNDSQRQATKDAGKIAGLEVLRIINEPTAASLAYGLDKKKNETILVFDLGGGTFDVSILEVGDGVFEVLSTSGDTHLGGDDFDKKLVDFFIEEFQKLENINLREDQQALQRLTEAAEKAKIELSSVTQTEITLPFLSLTPSGPKHFDTTLNRAKFEELCSTLIDRCRIPVETALKDAKLTKEDIDEVVLVGGSTRIPAVRELVQKVLDKVPKQSVNPDEVVAVGAAVQAGVLAGEVKDIVLLDVTPLSLGVETLGGVMSKIIVRNTTIPTQKSELFSTATDGQTNVEIHVLQGERGFAKDNKSLGTFRLDGIAPAPRGVPQIEVTFDIDANGILSVTAKDKGTGKEKSITITGASTLSQDEVERMVQEAEKNAAQDKENRQKIELRNQAESLINQAERQLKEFKLEPNVQAPIEQTIQQLQTALKEDNLEQVQSLCQELQNSLLEIGKQVYSKTETTTPNKNEEDVIDASFSEEK</sequence>
<accession>Q37106</accession>
<geneLocation type="cyanelle"/>
<keyword id="KW-0067">ATP-binding</keyword>
<keyword id="KW-0143">Chaperone</keyword>
<keyword id="KW-0194">Cyanelle</keyword>
<keyword id="KW-0547">Nucleotide-binding</keyword>
<keyword id="KW-0934">Plastid</keyword>
<keyword id="KW-0346">Stress response</keyword>
<dbReference type="EMBL" id="U30821">
    <property type="protein sequence ID" value="AAA81171.1"/>
    <property type="status" value="ALT_INIT"/>
    <property type="molecule type" value="Genomic_DNA"/>
</dbReference>
<dbReference type="EMBL" id="U30821">
    <property type="protein sequence ID" value="AAA81295.1"/>
    <property type="status" value="ALT_INIT"/>
    <property type="molecule type" value="Genomic_DNA"/>
</dbReference>
<dbReference type="PIR" id="T06828">
    <property type="entry name" value="T06828"/>
</dbReference>
<dbReference type="SMR" id="Q37106"/>
<dbReference type="GO" id="GO:0009842">
    <property type="term" value="C:cyanelle"/>
    <property type="evidence" value="ECO:0007669"/>
    <property type="project" value="UniProtKB-SubCell"/>
</dbReference>
<dbReference type="GO" id="GO:0005524">
    <property type="term" value="F:ATP binding"/>
    <property type="evidence" value="ECO:0007669"/>
    <property type="project" value="UniProtKB-UniRule"/>
</dbReference>
<dbReference type="GO" id="GO:0140662">
    <property type="term" value="F:ATP-dependent protein folding chaperone"/>
    <property type="evidence" value="ECO:0007669"/>
    <property type="project" value="InterPro"/>
</dbReference>
<dbReference type="GO" id="GO:0051082">
    <property type="term" value="F:unfolded protein binding"/>
    <property type="evidence" value="ECO:0007669"/>
    <property type="project" value="InterPro"/>
</dbReference>
<dbReference type="CDD" id="cd10234">
    <property type="entry name" value="ASKHA_NBD_HSP70_DnaK-like"/>
    <property type="match status" value="1"/>
</dbReference>
<dbReference type="FunFam" id="2.60.34.10:FF:000014">
    <property type="entry name" value="Chaperone protein DnaK HSP70"/>
    <property type="match status" value="1"/>
</dbReference>
<dbReference type="FunFam" id="1.20.1270.10:FF:000001">
    <property type="entry name" value="Molecular chaperone DnaK"/>
    <property type="match status" value="1"/>
</dbReference>
<dbReference type="FunFam" id="3.30.420.40:FF:000004">
    <property type="entry name" value="Molecular chaperone DnaK"/>
    <property type="match status" value="1"/>
</dbReference>
<dbReference type="FunFam" id="3.90.640.10:FF:000003">
    <property type="entry name" value="Molecular chaperone DnaK"/>
    <property type="match status" value="1"/>
</dbReference>
<dbReference type="Gene3D" id="1.20.1270.10">
    <property type="match status" value="1"/>
</dbReference>
<dbReference type="Gene3D" id="3.30.420.40">
    <property type="match status" value="2"/>
</dbReference>
<dbReference type="Gene3D" id="3.90.640.10">
    <property type="entry name" value="Actin, Chain A, domain 4"/>
    <property type="match status" value="1"/>
</dbReference>
<dbReference type="Gene3D" id="2.60.34.10">
    <property type="entry name" value="Substrate Binding Domain Of DNAk, Chain A, domain 1"/>
    <property type="match status" value="1"/>
</dbReference>
<dbReference type="HAMAP" id="MF_00332">
    <property type="entry name" value="DnaK"/>
    <property type="match status" value="1"/>
</dbReference>
<dbReference type="InterPro" id="IPR043129">
    <property type="entry name" value="ATPase_NBD"/>
</dbReference>
<dbReference type="InterPro" id="IPR012725">
    <property type="entry name" value="Chaperone_DnaK"/>
</dbReference>
<dbReference type="InterPro" id="IPR018181">
    <property type="entry name" value="Heat_shock_70_CS"/>
</dbReference>
<dbReference type="InterPro" id="IPR029048">
    <property type="entry name" value="HSP70_C_sf"/>
</dbReference>
<dbReference type="InterPro" id="IPR029047">
    <property type="entry name" value="HSP70_peptide-bd_sf"/>
</dbReference>
<dbReference type="InterPro" id="IPR013126">
    <property type="entry name" value="Hsp_70_fam"/>
</dbReference>
<dbReference type="NCBIfam" id="NF001413">
    <property type="entry name" value="PRK00290.1"/>
    <property type="match status" value="1"/>
</dbReference>
<dbReference type="NCBIfam" id="NF003520">
    <property type="entry name" value="PRK05183.1"/>
    <property type="match status" value="1"/>
</dbReference>
<dbReference type="NCBIfam" id="TIGR02350">
    <property type="entry name" value="prok_dnaK"/>
    <property type="match status" value="1"/>
</dbReference>
<dbReference type="PANTHER" id="PTHR19375">
    <property type="entry name" value="HEAT SHOCK PROTEIN 70KDA"/>
    <property type="match status" value="1"/>
</dbReference>
<dbReference type="Pfam" id="PF00012">
    <property type="entry name" value="HSP70"/>
    <property type="match status" value="1"/>
</dbReference>
<dbReference type="PRINTS" id="PR00301">
    <property type="entry name" value="HEATSHOCK70"/>
</dbReference>
<dbReference type="SUPFAM" id="SSF53067">
    <property type="entry name" value="Actin-like ATPase domain"/>
    <property type="match status" value="2"/>
</dbReference>
<dbReference type="SUPFAM" id="SSF100920">
    <property type="entry name" value="Heat shock protein 70kD (HSP70), peptide-binding domain"/>
    <property type="match status" value="1"/>
</dbReference>
<dbReference type="PROSITE" id="PS00297">
    <property type="entry name" value="HSP70_1"/>
    <property type="match status" value="1"/>
</dbReference>
<dbReference type="PROSITE" id="PS00329">
    <property type="entry name" value="HSP70_2"/>
    <property type="match status" value="1"/>
</dbReference>
<dbReference type="PROSITE" id="PS01036">
    <property type="entry name" value="HSP70_3"/>
    <property type="match status" value="1"/>
</dbReference>
<proteinExistence type="inferred from homology"/>
<name>DNAK_CYAPA</name>
<protein>
    <recommendedName>
        <fullName>Chaperone protein dnaK</fullName>
    </recommendedName>
    <alternativeName>
        <fullName>HSP70</fullName>
    </alternativeName>
    <alternativeName>
        <fullName>Heat shock 70 kDa protein</fullName>
    </alternativeName>
    <alternativeName>
        <fullName>Heat shock protein 70</fullName>
    </alternativeName>
</protein>
<evidence type="ECO:0000250" key="1"/>
<evidence type="ECO:0000256" key="2">
    <source>
        <dbReference type="SAM" id="MobiDB-lite"/>
    </source>
</evidence>
<evidence type="ECO:0000305" key="3"/>
<organism>
    <name type="scientific">Cyanophora paradoxa</name>
    <dbReference type="NCBI Taxonomy" id="2762"/>
    <lineage>
        <taxon>Eukaryota</taxon>
        <taxon>Glaucocystophyceae</taxon>
        <taxon>Cyanophoraceae</taxon>
        <taxon>Cyanophora</taxon>
    </lineage>
</organism>
<comment type="function">
    <text evidence="1">Acts as a chaperone.</text>
</comment>
<comment type="subcellular location">
    <subcellularLocation>
        <location>Plastid</location>
        <location>Cyanelle</location>
    </subcellularLocation>
</comment>
<comment type="similarity">
    <text evidence="3">Belongs to the heat shock protein 70 family.</text>
</comment>
<comment type="sequence caution" evidence="3">
    <conflict type="erroneous initiation">
        <sequence resource="EMBL-CDS" id="AAA81171"/>
    </conflict>
</comment>
<comment type="sequence caution" evidence="3">
    <conflict type="erroneous initiation">
        <sequence resource="EMBL-CDS" id="AAA81295"/>
    </conflict>
</comment>